<reference key="1">
    <citation type="submission" date="2006-05" db="EMBL/GenBank/DDBJ databases">
        <authorList>
            <consortium name="Genoscope"/>
        </authorList>
    </citation>
    <scope>NUCLEOTIDE SEQUENCE [LARGE SCALE GENOMIC DNA]</scope>
    <source>
        <strain>RCC307</strain>
    </source>
</reference>
<keyword id="KW-0227">DNA damage</keyword>
<keyword id="KW-0234">DNA repair</keyword>
<keyword id="KW-0235">DNA replication</keyword>
<keyword id="KW-0436">Ligase</keyword>
<keyword id="KW-0460">Magnesium</keyword>
<keyword id="KW-0464">Manganese</keyword>
<keyword id="KW-0479">Metal-binding</keyword>
<keyword id="KW-0520">NAD</keyword>
<keyword id="KW-1185">Reference proteome</keyword>
<keyword id="KW-0862">Zinc</keyword>
<organism>
    <name type="scientific">Synechococcus sp. (strain RCC307)</name>
    <dbReference type="NCBI Taxonomy" id="316278"/>
    <lineage>
        <taxon>Bacteria</taxon>
        <taxon>Bacillati</taxon>
        <taxon>Cyanobacteriota</taxon>
        <taxon>Cyanophyceae</taxon>
        <taxon>Synechococcales</taxon>
        <taxon>Synechococcaceae</taxon>
        <taxon>Synechococcus</taxon>
    </lineage>
</organism>
<dbReference type="EC" id="6.5.1.2" evidence="1"/>
<dbReference type="EMBL" id="CT978603">
    <property type="protein sequence ID" value="CAK29312.1"/>
    <property type="molecule type" value="Genomic_DNA"/>
</dbReference>
<dbReference type="SMR" id="A5GWQ3"/>
<dbReference type="STRING" id="316278.SynRCC307_2409"/>
<dbReference type="KEGG" id="syr:SynRCC307_2409"/>
<dbReference type="eggNOG" id="COG0272">
    <property type="taxonomic scope" value="Bacteria"/>
</dbReference>
<dbReference type="HOGENOM" id="CLU_007764_2_1_3"/>
<dbReference type="OrthoDB" id="9759736at2"/>
<dbReference type="Proteomes" id="UP000001115">
    <property type="component" value="Chromosome"/>
</dbReference>
<dbReference type="GO" id="GO:0005829">
    <property type="term" value="C:cytosol"/>
    <property type="evidence" value="ECO:0007669"/>
    <property type="project" value="TreeGrafter"/>
</dbReference>
<dbReference type="GO" id="GO:0003677">
    <property type="term" value="F:DNA binding"/>
    <property type="evidence" value="ECO:0007669"/>
    <property type="project" value="InterPro"/>
</dbReference>
<dbReference type="GO" id="GO:0003911">
    <property type="term" value="F:DNA ligase (NAD+) activity"/>
    <property type="evidence" value="ECO:0007669"/>
    <property type="project" value="UniProtKB-UniRule"/>
</dbReference>
<dbReference type="GO" id="GO:0046872">
    <property type="term" value="F:metal ion binding"/>
    <property type="evidence" value="ECO:0007669"/>
    <property type="project" value="UniProtKB-KW"/>
</dbReference>
<dbReference type="GO" id="GO:0006281">
    <property type="term" value="P:DNA repair"/>
    <property type="evidence" value="ECO:0007669"/>
    <property type="project" value="UniProtKB-KW"/>
</dbReference>
<dbReference type="GO" id="GO:0006260">
    <property type="term" value="P:DNA replication"/>
    <property type="evidence" value="ECO:0007669"/>
    <property type="project" value="UniProtKB-KW"/>
</dbReference>
<dbReference type="CDD" id="cd17748">
    <property type="entry name" value="BRCT_DNA_ligase_like"/>
    <property type="match status" value="1"/>
</dbReference>
<dbReference type="CDD" id="cd00114">
    <property type="entry name" value="LIGANc"/>
    <property type="match status" value="1"/>
</dbReference>
<dbReference type="FunFam" id="1.10.150.20:FF:000007">
    <property type="entry name" value="DNA ligase"/>
    <property type="match status" value="1"/>
</dbReference>
<dbReference type="FunFam" id="3.30.470.30:FF:000001">
    <property type="entry name" value="DNA ligase"/>
    <property type="match status" value="1"/>
</dbReference>
<dbReference type="Gene3D" id="6.20.10.30">
    <property type="match status" value="1"/>
</dbReference>
<dbReference type="Gene3D" id="1.10.150.20">
    <property type="entry name" value="5' to 3' exonuclease, C-terminal subdomain"/>
    <property type="match status" value="2"/>
</dbReference>
<dbReference type="Gene3D" id="3.40.50.10190">
    <property type="entry name" value="BRCT domain"/>
    <property type="match status" value="1"/>
</dbReference>
<dbReference type="Gene3D" id="3.30.470.30">
    <property type="entry name" value="DNA ligase/mRNA capping enzyme"/>
    <property type="match status" value="1"/>
</dbReference>
<dbReference type="Gene3D" id="1.10.287.610">
    <property type="entry name" value="Helix hairpin bin"/>
    <property type="match status" value="1"/>
</dbReference>
<dbReference type="Gene3D" id="2.40.50.140">
    <property type="entry name" value="Nucleic acid-binding proteins"/>
    <property type="match status" value="1"/>
</dbReference>
<dbReference type="HAMAP" id="MF_01588">
    <property type="entry name" value="DNA_ligase_A"/>
    <property type="match status" value="1"/>
</dbReference>
<dbReference type="InterPro" id="IPR001357">
    <property type="entry name" value="BRCT_dom"/>
</dbReference>
<dbReference type="InterPro" id="IPR036420">
    <property type="entry name" value="BRCT_dom_sf"/>
</dbReference>
<dbReference type="InterPro" id="IPR041663">
    <property type="entry name" value="DisA/LigA_HHH"/>
</dbReference>
<dbReference type="InterPro" id="IPR001679">
    <property type="entry name" value="DNA_ligase"/>
</dbReference>
<dbReference type="InterPro" id="IPR013839">
    <property type="entry name" value="DNAligase_adenylation"/>
</dbReference>
<dbReference type="InterPro" id="IPR013840">
    <property type="entry name" value="DNAligase_N"/>
</dbReference>
<dbReference type="InterPro" id="IPR003583">
    <property type="entry name" value="Hlx-hairpin-Hlx_DNA-bd_motif"/>
</dbReference>
<dbReference type="InterPro" id="IPR012340">
    <property type="entry name" value="NA-bd_OB-fold"/>
</dbReference>
<dbReference type="InterPro" id="IPR004150">
    <property type="entry name" value="NAD_DNA_ligase_OB"/>
</dbReference>
<dbReference type="InterPro" id="IPR010994">
    <property type="entry name" value="RuvA_2-like"/>
</dbReference>
<dbReference type="InterPro" id="IPR004149">
    <property type="entry name" value="Znf_DNAligase_C4"/>
</dbReference>
<dbReference type="NCBIfam" id="TIGR00575">
    <property type="entry name" value="dnlj"/>
    <property type="match status" value="1"/>
</dbReference>
<dbReference type="NCBIfam" id="NF005932">
    <property type="entry name" value="PRK07956.1"/>
    <property type="match status" value="1"/>
</dbReference>
<dbReference type="PANTHER" id="PTHR23389">
    <property type="entry name" value="CHROMOSOME TRANSMISSION FIDELITY FACTOR 18"/>
    <property type="match status" value="1"/>
</dbReference>
<dbReference type="PANTHER" id="PTHR23389:SF9">
    <property type="entry name" value="DNA LIGASE"/>
    <property type="match status" value="1"/>
</dbReference>
<dbReference type="Pfam" id="PF00533">
    <property type="entry name" value="BRCT"/>
    <property type="match status" value="1"/>
</dbReference>
<dbReference type="Pfam" id="PF01653">
    <property type="entry name" value="DNA_ligase_aden"/>
    <property type="match status" value="1"/>
</dbReference>
<dbReference type="Pfam" id="PF03120">
    <property type="entry name" value="DNA_ligase_OB"/>
    <property type="match status" value="1"/>
</dbReference>
<dbReference type="Pfam" id="PF03119">
    <property type="entry name" value="DNA_ligase_ZBD"/>
    <property type="match status" value="1"/>
</dbReference>
<dbReference type="Pfam" id="PF12826">
    <property type="entry name" value="HHH_2"/>
    <property type="match status" value="1"/>
</dbReference>
<dbReference type="Pfam" id="PF14520">
    <property type="entry name" value="HHH_5"/>
    <property type="match status" value="1"/>
</dbReference>
<dbReference type="Pfam" id="PF22745">
    <property type="entry name" value="Nlig-Ia"/>
    <property type="match status" value="1"/>
</dbReference>
<dbReference type="PIRSF" id="PIRSF001604">
    <property type="entry name" value="LigA"/>
    <property type="match status" value="1"/>
</dbReference>
<dbReference type="SMART" id="SM00292">
    <property type="entry name" value="BRCT"/>
    <property type="match status" value="1"/>
</dbReference>
<dbReference type="SMART" id="SM00278">
    <property type="entry name" value="HhH1"/>
    <property type="match status" value="2"/>
</dbReference>
<dbReference type="SMART" id="SM00532">
    <property type="entry name" value="LIGANc"/>
    <property type="match status" value="1"/>
</dbReference>
<dbReference type="SUPFAM" id="SSF52113">
    <property type="entry name" value="BRCT domain"/>
    <property type="match status" value="1"/>
</dbReference>
<dbReference type="SUPFAM" id="SSF56091">
    <property type="entry name" value="DNA ligase/mRNA capping enzyme, catalytic domain"/>
    <property type="match status" value="1"/>
</dbReference>
<dbReference type="SUPFAM" id="SSF50249">
    <property type="entry name" value="Nucleic acid-binding proteins"/>
    <property type="match status" value="1"/>
</dbReference>
<dbReference type="SUPFAM" id="SSF47781">
    <property type="entry name" value="RuvA domain 2-like"/>
    <property type="match status" value="1"/>
</dbReference>
<dbReference type="PROSITE" id="PS50172">
    <property type="entry name" value="BRCT"/>
    <property type="match status" value="1"/>
</dbReference>
<gene>
    <name evidence="1" type="primary">ligA</name>
    <name type="ordered locus">SynRCC307_2409</name>
</gene>
<sequence>MAFTAQQQLRAAELRQLLNRAAHAYYVLDAPEFEDAVYDRLYRELLDLEQQHPDLLSADSPTQRVGGPPAEGFSSVEHRIGMLSLDNAFNAEELQAWDARLGRQLEDNPERQREYVCELKIDGNALALSYADGVLVRAATRGDGSRGEEITANVRTIQAVPLRLQLKQPPAWVEVRGEAFIPDDTFEAINAERQQRGEALFANPRNACAGTLRQLDPKAVAARRLDFFAYTVHLPADEMGPKSQWDALQWLETAGFRVNPHRERTSGADGVVAFYDRWEEQRHQLPYATDGVVVKLDALERQQLAGFTQKAPRWAIALKYAAEEAPSRLLRLVAQVGRTGVVTPVAEFEAVPLAGTSVSRATLHNADRLEELDLHSGDTIVVRKAGEIIPEVLRVLPELRPEGAEQLELPSHCPECGSLLVRESGEAATRCVNSSCPAILRGALRHWVSRQAMDVDGLGGKLIEQLVDRGLVRSIADLYRLDAALLASLERMGEQSASNLIEALAASRQRPWHRLLYALGIHHIGSVNAKTLAAAFPSWEALQSASEEALNELYGIGPEISQSMQQWCSTEANQSLMAELAALELPLASDDSSAESAGAIGALTGQTLVLTGTLPNLSRLEAQALIEAAGGKVTGSVSKKTNYVVAGSEAGSKLQKAEKLGVAVIDEAELKALLS</sequence>
<evidence type="ECO:0000255" key="1">
    <source>
        <dbReference type="HAMAP-Rule" id="MF_01588"/>
    </source>
</evidence>
<accession>A5GWQ3</accession>
<protein>
    <recommendedName>
        <fullName evidence="1">DNA ligase</fullName>
        <ecNumber evidence="1">6.5.1.2</ecNumber>
    </recommendedName>
    <alternativeName>
        <fullName evidence="1">Polydeoxyribonucleotide synthase [NAD(+)]</fullName>
    </alternativeName>
</protein>
<comment type="function">
    <text evidence="1">DNA ligase that catalyzes the formation of phosphodiester linkages between 5'-phosphoryl and 3'-hydroxyl groups in double-stranded DNA using NAD as a coenzyme and as the energy source for the reaction. It is essential for DNA replication and repair of damaged DNA.</text>
</comment>
<comment type="catalytic activity">
    <reaction evidence="1">
        <text>NAD(+) + (deoxyribonucleotide)n-3'-hydroxyl + 5'-phospho-(deoxyribonucleotide)m = (deoxyribonucleotide)n+m + AMP + beta-nicotinamide D-nucleotide.</text>
        <dbReference type="EC" id="6.5.1.2"/>
    </reaction>
</comment>
<comment type="cofactor">
    <cofactor evidence="1">
        <name>Mg(2+)</name>
        <dbReference type="ChEBI" id="CHEBI:18420"/>
    </cofactor>
    <cofactor evidence="1">
        <name>Mn(2+)</name>
        <dbReference type="ChEBI" id="CHEBI:29035"/>
    </cofactor>
</comment>
<comment type="similarity">
    <text evidence="1">Belongs to the NAD-dependent DNA ligase family. LigA subfamily.</text>
</comment>
<proteinExistence type="inferred from homology"/>
<feature type="chain" id="PRO_0000313485" description="DNA ligase">
    <location>
        <begin position="1"/>
        <end position="675"/>
    </location>
</feature>
<feature type="domain" description="BRCT" evidence="1">
    <location>
        <begin position="598"/>
        <end position="675"/>
    </location>
</feature>
<feature type="active site" description="N6-AMP-lysine intermediate" evidence="1">
    <location>
        <position position="120"/>
    </location>
</feature>
<feature type="binding site" evidence="1">
    <location>
        <begin position="35"/>
        <end position="39"/>
    </location>
    <ligand>
        <name>NAD(+)</name>
        <dbReference type="ChEBI" id="CHEBI:57540"/>
    </ligand>
</feature>
<feature type="binding site" evidence="1">
    <location>
        <begin position="84"/>
        <end position="85"/>
    </location>
    <ligand>
        <name>NAD(+)</name>
        <dbReference type="ChEBI" id="CHEBI:57540"/>
    </ligand>
</feature>
<feature type="binding site" evidence="1">
    <location>
        <position position="118"/>
    </location>
    <ligand>
        <name>NAD(+)</name>
        <dbReference type="ChEBI" id="CHEBI:57540"/>
    </ligand>
</feature>
<feature type="binding site" evidence="1">
    <location>
        <position position="141"/>
    </location>
    <ligand>
        <name>NAD(+)</name>
        <dbReference type="ChEBI" id="CHEBI:57540"/>
    </ligand>
</feature>
<feature type="binding site" evidence="1">
    <location>
        <position position="178"/>
    </location>
    <ligand>
        <name>NAD(+)</name>
        <dbReference type="ChEBI" id="CHEBI:57540"/>
    </ligand>
</feature>
<feature type="binding site" evidence="1">
    <location>
        <position position="295"/>
    </location>
    <ligand>
        <name>NAD(+)</name>
        <dbReference type="ChEBI" id="CHEBI:57540"/>
    </ligand>
</feature>
<feature type="binding site" evidence="1">
    <location>
        <position position="319"/>
    </location>
    <ligand>
        <name>NAD(+)</name>
        <dbReference type="ChEBI" id="CHEBI:57540"/>
    </ligand>
</feature>
<feature type="binding site" evidence="1">
    <location>
        <position position="413"/>
    </location>
    <ligand>
        <name>Zn(2+)</name>
        <dbReference type="ChEBI" id="CHEBI:29105"/>
    </ligand>
</feature>
<feature type="binding site" evidence="1">
    <location>
        <position position="416"/>
    </location>
    <ligand>
        <name>Zn(2+)</name>
        <dbReference type="ChEBI" id="CHEBI:29105"/>
    </ligand>
</feature>
<feature type="binding site" evidence="1">
    <location>
        <position position="431"/>
    </location>
    <ligand>
        <name>Zn(2+)</name>
        <dbReference type="ChEBI" id="CHEBI:29105"/>
    </ligand>
</feature>
<feature type="binding site" evidence="1">
    <location>
        <position position="436"/>
    </location>
    <ligand>
        <name>Zn(2+)</name>
        <dbReference type="ChEBI" id="CHEBI:29105"/>
    </ligand>
</feature>
<name>DNLJ_SYNR3</name>